<protein>
    <recommendedName>
        <fullName evidence="1">Adenylate kinase</fullName>
        <shortName evidence="1">AK</shortName>
        <ecNumber evidence="1">2.7.4.3</ecNumber>
    </recommendedName>
    <alternativeName>
        <fullName evidence="1">ATP-AMP transphosphorylase</fullName>
    </alternativeName>
    <alternativeName>
        <fullName evidence="1">ATP:AMP phosphotransferase</fullName>
    </alternativeName>
    <alternativeName>
        <fullName evidence="1">Adenylate monophosphate kinase</fullName>
    </alternativeName>
</protein>
<evidence type="ECO:0000255" key="1">
    <source>
        <dbReference type="HAMAP-Rule" id="MF_00235"/>
    </source>
</evidence>
<sequence length="217" mass="24391">MNLVLMGLPGAGKGTQAQKIVENFPIPHISTGDIFRAAMKNETPMGIEAKKYIDKGELVPDEVTNGIVKERLAQDDTKDGFMLDGFPRNLNQAAALDEMLAESNRHLDAVINIHVEPDVLVERLSGRFICRNCGATYHKLYNAPKVEGTCDVCGHHEFYQRDDDKPETVKNRLDVNIKLNTPLVDYYQKKGVLHEINGEQDIDKVYEDIKKVLTNLN</sequence>
<keyword id="KW-0067">ATP-binding</keyword>
<keyword id="KW-0963">Cytoplasm</keyword>
<keyword id="KW-0418">Kinase</keyword>
<keyword id="KW-0479">Metal-binding</keyword>
<keyword id="KW-0545">Nucleotide biosynthesis</keyword>
<keyword id="KW-0547">Nucleotide-binding</keyword>
<keyword id="KW-0808">Transferase</keyword>
<keyword id="KW-0862">Zinc</keyword>
<reference key="1">
    <citation type="journal article" date="2008" name="DNA Res.">
        <title>Comparative genome analysis of Lactobacillus reuteri and Lactobacillus fermentum reveal a genomic island for reuterin and cobalamin production.</title>
        <authorList>
            <person name="Morita H."/>
            <person name="Toh H."/>
            <person name="Fukuda S."/>
            <person name="Horikawa H."/>
            <person name="Oshima K."/>
            <person name="Suzuki T."/>
            <person name="Murakami M."/>
            <person name="Hisamatsu S."/>
            <person name="Kato Y."/>
            <person name="Takizawa T."/>
            <person name="Fukuoka H."/>
            <person name="Yoshimura T."/>
            <person name="Itoh K."/>
            <person name="O'Sullivan D.J."/>
            <person name="McKay L.L."/>
            <person name="Ohno H."/>
            <person name="Kikuchi J."/>
            <person name="Masaoka T."/>
            <person name="Hattori M."/>
        </authorList>
    </citation>
    <scope>NUCLEOTIDE SEQUENCE [LARGE SCALE GENOMIC DNA]</scope>
    <source>
        <strain>JCM 1112</strain>
    </source>
</reference>
<name>KAD_LIMRJ</name>
<accession>B2G8V7</accession>
<proteinExistence type="inferred from homology"/>
<feature type="chain" id="PRO_1000100576" description="Adenylate kinase">
    <location>
        <begin position="1"/>
        <end position="217"/>
    </location>
</feature>
<feature type="region of interest" description="NMP" evidence="1">
    <location>
        <begin position="30"/>
        <end position="59"/>
    </location>
</feature>
<feature type="region of interest" description="LID" evidence="1">
    <location>
        <begin position="126"/>
        <end position="164"/>
    </location>
</feature>
<feature type="binding site" evidence="1">
    <location>
        <begin position="10"/>
        <end position="15"/>
    </location>
    <ligand>
        <name>ATP</name>
        <dbReference type="ChEBI" id="CHEBI:30616"/>
    </ligand>
</feature>
<feature type="binding site" evidence="1">
    <location>
        <position position="31"/>
    </location>
    <ligand>
        <name>AMP</name>
        <dbReference type="ChEBI" id="CHEBI:456215"/>
    </ligand>
</feature>
<feature type="binding site" evidence="1">
    <location>
        <position position="36"/>
    </location>
    <ligand>
        <name>AMP</name>
        <dbReference type="ChEBI" id="CHEBI:456215"/>
    </ligand>
</feature>
<feature type="binding site" evidence="1">
    <location>
        <begin position="57"/>
        <end position="59"/>
    </location>
    <ligand>
        <name>AMP</name>
        <dbReference type="ChEBI" id="CHEBI:456215"/>
    </ligand>
</feature>
<feature type="binding site" evidence="1">
    <location>
        <begin position="85"/>
        <end position="88"/>
    </location>
    <ligand>
        <name>AMP</name>
        <dbReference type="ChEBI" id="CHEBI:456215"/>
    </ligand>
</feature>
<feature type="binding site" evidence="1">
    <location>
        <position position="92"/>
    </location>
    <ligand>
        <name>AMP</name>
        <dbReference type="ChEBI" id="CHEBI:456215"/>
    </ligand>
</feature>
<feature type="binding site" evidence="1">
    <location>
        <position position="127"/>
    </location>
    <ligand>
        <name>ATP</name>
        <dbReference type="ChEBI" id="CHEBI:30616"/>
    </ligand>
</feature>
<feature type="binding site" evidence="1">
    <location>
        <position position="130"/>
    </location>
    <ligand>
        <name>Zn(2+)</name>
        <dbReference type="ChEBI" id="CHEBI:29105"/>
        <note>structural</note>
    </ligand>
</feature>
<feature type="binding site" evidence="1">
    <location>
        <position position="133"/>
    </location>
    <ligand>
        <name>Zn(2+)</name>
        <dbReference type="ChEBI" id="CHEBI:29105"/>
        <note>structural</note>
    </ligand>
</feature>
<feature type="binding site" evidence="1">
    <location>
        <begin position="136"/>
        <end position="137"/>
    </location>
    <ligand>
        <name>ATP</name>
        <dbReference type="ChEBI" id="CHEBI:30616"/>
    </ligand>
</feature>
<feature type="binding site" evidence="1">
    <location>
        <position position="150"/>
    </location>
    <ligand>
        <name>Zn(2+)</name>
        <dbReference type="ChEBI" id="CHEBI:29105"/>
        <note>structural</note>
    </ligand>
</feature>
<feature type="binding site" evidence="1">
    <location>
        <position position="153"/>
    </location>
    <ligand>
        <name>Zn(2+)</name>
        <dbReference type="ChEBI" id="CHEBI:29105"/>
        <note>structural</note>
    </ligand>
</feature>
<feature type="binding site" evidence="1">
    <location>
        <position position="161"/>
    </location>
    <ligand>
        <name>AMP</name>
        <dbReference type="ChEBI" id="CHEBI:456215"/>
    </ligand>
</feature>
<feature type="binding site" evidence="1">
    <location>
        <position position="172"/>
    </location>
    <ligand>
        <name>AMP</name>
        <dbReference type="ChEBI" id="CHEBI:456215"/>
    </ligand>
</feature>
<feature type="binding site" evidence="1">
    <location>
        <position position="200"/>
    </location>
    <ligand>
        <name>ATP</name>
        <dbReference type="ChEBI" id="CHEBI:30616"/>
    </ligand>
</feature>
<dbReference type="EC" id="2.7.4.3" evidence="1"/>
<dbReference type="EMBL" id="AP007281">
    <property type="protein sequence ID" value="BAG25889.1"/>
    <property type="molecule type" value="Genomic_DNA"/>
</dbReference>
<dbReference type="SMR" id="B2G8V7"/>
<dbReference type="KEGG" id="lrf:LAR_1373"/>
<dbReference type="HOGENOM" id="CLU_032354_1_2_9"/>
<dbReference type="UniPathway" id="UPA00588">
    <property type="reaction ID" value="UER00649"/>
</dbReference>
<dbReference type="GO" id="GO:0005737">
    <property type="term" value="C:cytoplasm"/>
    <property type="evidence" value="ECO:0007669"/>
    <property type="project" value="UniProtKB-SubCell"/>
</dbReference>
<dbReference type="GO" id="GO:0004017">
    <property type="term" value="F:adenylate kinase activity"/>
    <property type="evidence" value="ECO:0007669"/>
    <property type="project" value="UniProtKB-UniRule"/>
</dbReference>
<dbReference type="GO" id="GO:0005524">
    <property type="term" value="F:ATP binding"/>
    <property type="evidence" value="ECO:0007669"/>
    <property type="project" value="UniProtKB-UniRule"/>
</dbReference>
<dbReference type="GO" id="GO:0008270">
    <property type="term" value="F:zinc ion binding"/>
    <property type="evidence" value="ECO:0007669"/>
    <property type="project" value="UniProtKB-UniRule"/>
</dbReference>
<dbReference type="GO" id="GO:0044209">
    <property type="term" value="P:AMP salvage"/>
    <property type="evidence" value="ECO:0007669"/>
    <property type="project" value="UniProtKB-UniRule"/>
</dbReference>
<dbReference type="CDD" id="cd01428">
    <property type="entry name" value="ADK"/>
    <property type="match status" value="1"/>
</dbReference>
<dbReference type="FunFam" id="3.40.50.300:FF:000106">
    <property type="entry name" value="Adenylate kinase mitochondrial"/>
    <property type="match status" value="1"/>
</dbReference>
<dbReference type="Gene3D" id="3.40.50.300">
    <property type="entry name" value="P-loop containing nucleotide triphosphate hydrolases"/>
    <property type="match status" value="1"/>
</dbReference>
<dbReference type="HAMAP" id="MF_00235">
    <property type="entry name" value="Adenylate_kinase_Adk"/>
    <property type="match status" value="1"/>
</dbReference>
<dbReference type="InterPro" id="IPR006259">
    <property type="entry name" value="Adenyl_kin_sub"/>
</dbReference>
<dbReference type="InterPro" id="IPR000850">
    <property type="entry name" value="Adenylat/UMP-CMP_kin"/>
</dbReference>
<dbReference type="InterPro" id="IPR033690">
    <property type="entry name" value="Adenylat_kinase_CS"/>
</dbReference>
<dbReference type="InterPro" id="IPR007862">
    <property type="entry name" value="Adenylate_kinase_lid-dom"/>
</dbReference>
<dbReference type="InterPro" id="IPR027417">
    <property type="entry name" value="P-loop_NTPase"/>
</dbReference>
<dbReference type="NCBIfam" id="TIGR01351">
    <property type="entry name" value="adk"/>
    <property type="match status" value="1"/>
</dbReference>
<dbReference type="NCBIfam" id="NF001380">
    <property type="entry name" value="PRK00279.1-2"/>
    <property type="match status" value="1"/>
</dbReference>
<dbReference type="NCBIfam" id="NF001381">
    <property type="entry name" value="PRK00279.1-3"/>
    <property type="match status" value="1"/>
</dbReference>
<dbReference type="NCBIfam" id="NF001382">
    <property type="entry name" value="PRK00279.1-4"/>
    <property type="match status" value="1"/>
</dbReference>
<dbReference type="PANTHER" id="PTHR23359">
    <property type="entry name" value="NUCLEOTIDE KINASE"/>
    <property type="match status" value="1"/>
</dbReference>
<dbReference type="Pfam" id="PF00406">
    <property type="entry name" value="ADK"/>
    <property type="match status" value="1"/>
</dbReference>
<dbReference type="Pfam" id="PF05191">
    <property type="entry name" value="ADK_lid"/>
    <property type="match status" value="1"/>
</dbReference>
<dbReference type="PRINTS" id="PR00094">
    <property type="entry name" value="ADENYLTKNASE"/>
</dbReference>
<dbReference type="SUPFAM" id="SSF52540">
    <property type="entry name" value="P-loop containing nucleoside triphosphate hydrolases"/>
    <property type="match status" value="1"/>
</dbReference>
<dbReference type="PROSITE" id="PS00113">
    <property type="entry name" value="ADENYLATE_KINASE"/>
    <property type="match status" value="1"/>
</dbReference>
<comment type="function">
    <text evidence="1">Catalyzes the reversible transfer of the terminal phosphate group between ATP and AMP. Plays an important role in cellular energy homeostasis and in adenine nucleotide metabolism.</text>
</comment>
<comment type="catalytic activity">
    <reaction evidence="1">
        <text>AMP + ATP = 2 ADP</text>
        <dbReference type="Rhea" id="RHEA:12973"/>
        <dbReference type="ChEBI" id="CHEBI:30616"/>
        <dbReference type="ChEBI" id="CHEBI:456215"/>
        <dbReference type="ChEBI" id="CHEBI:456216"/>
        <dbReference type="EC" id="2.7.4.3"/>
    </reaction>
</comment>
<comment type="pathway">
    <text evidence="1">Purine metabolism; AMP biosynthesis via salvage pathway; AMP from ADP: step 1/1.</text>
</comment>
<comment type="subunit">
    <text evidence="1">Monomer.</text>
</comment>
<comment type="subcellular location">
    <subcellularLocation>
        <location evidence="1">Cytoplasm</location>
    </subcellularLocation>
</comment>
<comment type="domain">
    <text evidence="1">Consists of three domains, a large central CORE domain and two small peripheral domains, NMPbind and LID, which undergo movements during catalysis. The LID domain closes over the site of phosphoryl transfer upon ATP binding. Assembling and dissambling the active center during each catalytic cycle provides an effective means to prevent ATP hydrolysis. Some bacteria have evolved a zinc-coordinating structure that stabilizes the LID domain.</text>
</comment>
<comment type="similarity">
    <text evidence="1">Belongs to the adenylate kinase family.</text>
</comment>
<gene>
    <name evidence="1" type="primary">adk</name>
    <name type="ordered locus">LAR_1373</name>
</gene>
<organism>
    <name type="scientific">Limosilactobacillus reuteri subsp. reuteri (strain JCM 1112)</name>
    <name type="common">Lactobacillus reuteri</name>
    <dbReference type="NCBI Taxonomy" id="557433"/>
    <lineage>
        <taxon>Bacteria</taxon>
        <taxon>Bacillati</taxon>
        <taxon>Bacillota</taxon>
        <taxon>Bacilli</taxon>
        <taxon>Lactobacillales</taxon>
        <taxon>Lactobacillaceae</taxon>
        <taxon>Limosilactobacillus</taxon>
    </lineage>
</organism>